<feature type="chain" id="PRO_0000145934" description="Phosphoglycerate kinase">
    <location>
        <begin position="1"/>
        <end position="401"/>
    </location>
</feature>
<feature type="binding site" evidence="1">
    <location>
        <begin position="26"/>
        <end position="28"/>
    </location>
    <ligand>
        <name>substrate</name>
    </ligand>
</feature>
<feature type="binding site" evidence="1">
    <location>
        <position position="41"/>
    </location>
    <ligand>
        <name>substrate</name>
    </ligand>
</feature>
<feature type="binding site" evidence="1">
    <location>
        <begin position="64"/>
        <end position="67"/>
    </location>
    <ligand>
        <name>substrate</name>
    </ligand>
</feature>
<feature type="binding site" evidence="1">
    <location>
        <position position="125"/>
    </location>
    <ligand>
        <name>substrate</name>
    </ligand>
</feature>
<feature type="binding site" evidence="1">
    <location>
        <position position="158"/>
    </location>
    <ligand>
        <name>substrate</name>
    </ligand>
</feature>
<feature type="binding site" evidence="1">
    <location>
        <position position="209"/>
    </location>
    <ligand>
        <name>ATP</name>
        <dbReference type="ChEBI" id="CHEBI:30616"/>
    </ligand>
</feature>
<feature type="binding site" evidence="1">
    <location>
        <position position="300"/>
    </location>
    <ligand>
        <name>ATP</name>
        <dbReference type="ChEBI" id="CHEBI:30616"/>
    </ligand>
</feature>
<feature type="binding site" evidence="1">
    <location>
        <position position="331"/>
    </location>
    <ligand>
        <name>ATP</name>
        <dbReference type="ChEBI" id="CHEBI:30616"/>
    </ligand>
</feature>
<feature type="binding site" evidence="1">
    <location>
        <begin position="357"/>
        <end position="360"/>
    </location>
    <ligand>
        <name>ATP</name>
        <dbReference type="ChEBI" id="CHEBI:30616"/>
    </ligand>
</feature>
<reference key="1">
    <citation type="journal article" date="2003" name="Proc. Natl. Acad. Sci. U.S.A.">
        <title>The genome sequence of Clostridium tetani, the causative agent of tetanus disease.</title>
        <authorList>
            <person name="Brueggemann H."/>
            <person name="Baeumer S."/>
            <person name="Fricke W.F."/>
            <person name="Wiezer A."/>
            <person name="Liesegang H."/>
            <person name="Decker I."/>
            <person name="Herzberg C."/>
            <person name="Martinez-Arias R."/>
            <person name="Merkl R."/>
            <person name="Henne A."/>
            <person name="Gottschalk G."/>
        </authorList>
    </citation>
    <scope>NUCLEOTIDE SEQUENCE [LARGE SCALE GENOMIC DNA]</scope>
    <source>
        <strain>Massachusetts / E88</strain>
    </source>
</reference>
<sequence length="401" mass="43578">MVYVAFNKKTIEDIDVKGRKVLVRCDFNVPLKDGKITDENRLMGALPTIKYIMEKGGKVILCSHLGKPKGEPKQELSLAPVAKRLSELLNKEVLFPADNEVVGENAKKAVENMKDGDVILLQNTRYRKEETKNEETFSKELASLADIFVNDAFGTAHRAHCSTVGVTEFVATSVCGYLIQKELKFLGNAVENPQRPFISILGGAKVSDKINVINNLLEKVDTLIIGGGMSYTFQKAQGYTIGSSLLEEDKIDYAKEMIEKAKEKGVKLLLPVDNVAAEKFAEDAEAIITEDQNIKEGYMGLDIGPKTSKLYSQEVQSAKTVVWNGPMGVFEFEKFAKGTIEVAKAMAESQATTIIGGGDSAAAVNQLGFGDKMTHISTGGGASLEFLEGKELPGIAALNDK</sequence>
<accession>Q898R3</accession>
<keyword id="KW-0067">ATP-binding</keyword>
<keyword id="KW-0963">Cytoplasm</keyword>
<keyword id="KW-0324">Glycolysis</keyword>
<keyword id="KW-0418">Kinase</keyword>
<keyword id="KW-0547">Nucleotide-binding</keyword>
<keyword id="KW-1185">Reference proteome</keyword>
<keyword id="KW-0808">Transferase</keyword>
<protein>
    <recommendedName>
        <fullName evidence="1">Phosphoglycerate kinase</fullName>
        <ecNumber evidence="1">2.7.2.3</ecNumber>
    </recommendedName>
</protein>
<name>PGK_CLOTE</name>
<dbReference type="EC" id="2.7.2.3" evidence="1"/>
<dbReference type="EMBL" id="AE015927">
    <property type="protein sequence ID" value="AAO35016.1"/>
    <property type="molecule type" value="Genomic_DNA"/>
</dbReference>
<dbReference type="SMR" id="Q898R3"/>
<dbReference type="STRING" id="212717.CTC_00379"/>
<dbReference type="KEGG" id="ctc:CTC_00379"/>
<dbReference type="HOGENOM" id="CLU_025427_0_2_9"/>
<dbReference type="UniPathway" id="UPA00109">
    <property type="reaction ID" value="UER00185"/>
</dbReference>
<dbReference type="Proteomes" id="UP000001412">
    <property type="component" value="Chromosome"/>
</dbReference>
<dbReference type="GO" id="GO:0005829">
    <property type="term" value="C:cytosol"/>
    <property type="evidence" value="ECO:0007669"/>
    <property type="project" value="TreeGrafter"/>
</dbReference>
<dbReference type="GO" id="GO:0043531">
    <property type="term" value="F:ADP binding"/>
    <property type="evidence" value="ECO:0007669"/>
    <property type="project" value="TreeGrafter"/>
</dbReference>
<dbReference type="GO" id="GO:0005524">
    <property type="term" value="F:ATP binding"/>
    <property type="evidence" value="ECO:0007669"/>
    <property type="project" value="UniProtKB-KW"/>
</dbReference>
<dbReference type="GO" id="GO:0004618">
    <property type="term" value="F:phosphoglycerate kinase activity"/>
    <property type="evidence" value="ECO:0007669"/>
    <property type="project" value="UniProtKB-UniRule"/>
</dbReference>
<dbReference type="GO" id="GO:0006094">
    <property type="term" value="P:gluconeogenesis"/>
    <property type="evidence" value="ECO:0007669"/>
    <property type="project" value="TreeGrafter"/>
</dbReference>
<dbReference type="GO" id="GO:0006096">
    <property type="term" value="P:glycolytic process"/>
    <property type="evidence" value="ECO:0007669"/>
    <property type="project" value="UniProtKB-UniRule"/>
</dbReference>
<dbReference type="CDD" id="cd00318">
    <property type="entry name" value="Phosphoglycerate_kinase"/>
    <property type="match status" value="1"/>
</dbReference>
<dbReference type="FunFam" id="3.40.50.1260:FF:000007">
    <property type="entry name" value="Phosphoglycerate kinase"/>
    <property type="match status" value="1"/>
</dbReference>
<dbReference type="FunFam" id="3.40.50.1260:FF:000008">
    <property type="entry name" value="Phosphoglycerate kinase"/>
    <property type="match status" value="1"/>
</dbReference>
<dbReference type="Gene3D" id="3.40.50.1260">
    <property type="entry name" value="Phosphoglycerate kinase, N-terminal domain"/>
    <property type="match status" value="2"/>
</dbReference>
<dbReference type="HAMAP" id="MF_00145">
    <property type="entry name" value="Phosphoglyc_kinase"/>
    <property type="match status" value="1"/>
</dbReference>
<dbReference type="InterPro" id="IPR001576">
    <property type="entry name" value="Phosphoglycerate_kinase"/>
</dbReference>
<dbReference type="InterPro" id="IPR015911">
    <property type="entry name" value="Phosphoglycerate_kinase_CS"/>
</dbReference>
<dbReference type="InterPro" id="IPR015824">
    <property type="entry name" value="Phosphoglycerate_kinase_N"/>
</dbReference>
<dbReference type="InterPro" id="IPR036043">
    <property type="entry name" value="Phosphoglycerate_kinase_sf"/>
</dbReference>
<dbReference type="PANTHER" id="PTHR11406">
    <property type="entry name" value="PHOSPHOGLYCERATE KINASE"/>
    <property type="match status" value="1"/>
</dbReference>
<dbReference type="PANTHER" id="PTHR11406:SF23">
    <property type="entry name" value="PHOSPHOGLYCERATE KINASE 1, CHLOROPLASTIC-RELATED"/>
    <property type="match status" value="1"/>
</dbReference>
<dbReference type="Pfam" id="PF00162">
    <property type="entry name" value="PGK"/>
    <property type="match status" value="1"/>
</dbReference>
<dbReference type="PIRSF" id="PIRSF000724">
    <property type="entry name" value="Pgk"/>
    <property type="match status" value="1"/>
</dbReference>
<dbReference type="PRINTS" id="PR00477">
    <property type="entry name" value="PHGLYCKINASE"/>
</dbReference>
<dbReference type="SUPFAM" id="SSF53748">
    <property type="entry name" value="Phosphoglycerate kinase"/>
    <property type="match status" value="1"/>
</dbReference>
<dbReference type="PROSITE" id="PS00111">
    <property type="entry name" value="PGLYCERATE_KINASE"/>
    <property type="match status" value="1"/>
</dbReference>
<organism>
    <name type="scientific">Clostridium tetani (strain Massachusetts / E88)</name>
    <dbReference type="NCBI Taxonomy" id="212717"/>
    <lineage>
        <taxon>Bacteria</taxon>
        <taxon>Bacillati</taxon>
        <taxon>Bacillota</taxon>
        <taxon>Clostridia</taxon>
        <taxon>Eubacteriales</taxon>
        <taxon>Clostridiaceae</taxon>
        <taxon>Clostridium</taxon>
    </lineage>
</organism>
<gene>
    <name evidence="1" type="primary">pgk</name>
    <name type="ordered locus">CTC_00379</name>
</gene>
<proteinExistence type="inferred from homology"/>
<evidence type="ECO:0000255" key="1">
    <source>
        <dbReference type="HAMAP-Rule" id="MF_00145"/>
    </source>
</evidence>
<comment type="catalytic activity">
    <reaction evidence="1">
        <text>(2R)-3-phosphoglycerate + ATP = (2R)-3-phospho-glyceroyl phosphate + ADP</text>
        <dbReference type="Rhea" id="RHEA:14801"/>
        <dbReference type="ChEBI" id="CHEBI:30616"/>
        <dbReference type="ChEBI" id="CHEBI:57604"/>
        <dbReference type="ChEBI" id="CHEBI:58272"/>
        <dbReference type="ChEBI" id="CHEBI:456216"/>
        <dbReference type="EC" id="2.7.2.3"/>
    </reaction>
</comment>
<comment type="pathway">
    <text evidence="1">Carbohydrate degradation; glycolysis; pyruvate from D-glyceraldehyde 3-phosphate: step 2/5.</text>
</comment>
<comment type="subunit">
    <text evidence="1">Monomer.</text>
</comment>
<comment type="subcellular location">
    <subcellularLocation>
        <location evidence="1">Cytoplasm</location>
    </subcellularLocation>
</comment>
<comment type="similarity">
    <text evidence="1">Belongs to the phosphoglycerate kinase family.</text>
</comment>